<reference key="1">
    <citation type="journal article" date="2006" name="J. Bacteriol.">
        <title>Comparative genomic evidence for a close relationship between the dimorphic prosthecate bacteria Hyphomonas neptunium and Caulobacter crescentus.</title>
        <authorList>
            <person name="Badger J.H."/>
            <person name="Hoover T.R."/>
            <person name="Brun Y.V."/>
            <person name="Weiner R.M."/>
            <person name="Laub M.T."/>
            <person name="Alexandre G."/>
            <person name="Mrazek J."/>
            <person name="Ren Q."/>
            <person name="Paulsen I.T."/>
            <person name="Nelson K.E."/>
            <person name="Khouri H.M."/>
            <person name="Radune D."/>
            <person name="Sosa J."/>
            <person name="Dodson R.J."/>
            <person name="Sullivan S.A."/>
            <person name="Rosovitz M.J."/>
            <person name="Madupu R."/>
            <person name="Brinkac L.M."/>
            <person name="Durkin A.S."/>
            <person name="Daugherty S.C."/>
            <person name="Kothari S.P."/>
            <person name="Giglio M.G."/>
            <person name="Zhou L."/>
            <person name="Haft D.H."/>
            <person name="Selengut J.D."/>
            <person name="Davidsen T.M."/>
            <person name="Yang Q."/>
            <person name="Zafar N."/>
            <person name="Ward N.L."/>
        </authorList>
    </citation>
    <scope>NUCLEOTIDE SEQUENCE [LARGE SCALE GENOMIC DNA]</scope>
    <source>
        <strain>ATCC 15444</strain>
    </source>
</reference>
<organism>
    <name type="scientific">Hyphomonas neptunium (strain ATCC 15444)</name>
    <dbReference type="NCBI Taxonomy" id="228405"/>
    <lineage>
        <taxon>Bacteria</taxon>
        <taxon>Pseudomonadati</taxon>
        <taxon>Pseudomonadota</taxon>
        <taxon>Alphaproteobacteria</taxon>
        <taxon>Hyphomonadales</taxon>
        <taxon>Hyphomonadaceae</taxon>
        <taxon>Hyphomonas</taxon>
    </lineage>
</organism>
<keyword id="KW-1185">Reference proteome</keyword>
<keyword id="KW-0687">Ribonucleoprotein</keyword>
<keyword id="KW-0689">Ribosomal protein</keyword>
<keyword id="KW-0694">RNA-binding</keyword>
<keyword id="KW-0699">rRNA-binding</keyword>
<evidence type="ECO:0000255" key="1">
    <source>
        <dbReference type="HAMAP-Rule" id="MF_00503"/>
    </source>
</evidence>
<evidence type="ECO:0000256" key="2">
    <source>
        <dbReference type="SAM" id="MobiDB-lite"/>
    </source>
</evidence>
<evidence type="ECO:0000305" key="3"/>
<sequence length="194" mass="20907">MQVILLERIDRLGKIGDEVRVKNGFARNFLIPQGKALIANDKNRKRFEIERDAIEARNAAARDAAQTEADNLEGAIFVLIRQAGETGQLYGSVTARDVAEAAEAAGYKVDRAAVRLDKPIKAVGLSEVSVRLHAEVSVKVQVNVARSTEEAERQEKGEDIVAALQAENQAQADEQAGELAAAAAERGDMGGDEE</sequence>
<gene>
    <name evidence="1" type="primary">rplI</name>
    <name type="ordered locus">HNE_2163</name>
</gene>
<dbReference type="EMBL" id="CP000158">
    <property type="protein sequence ID" value="ABI76962.1"/>
    <property type="molecule type" value="Genomic_DNA"/>
</dbReference>
<dbReference type="RefSeq" id="WP_011647158.1">
    <property type="nucleotide sequence ID" value="NC_008358.1"/>
</dbReference>
<dbReference type="SMR" id="Q0C083"/>
<dbReference type="STRING" id="228405.HNE_2163"/>
<dbReference type="KEGG" id="hne:HNE_2163"/>
<dbReference type="eggNOG" id="COG0359">
    <property type="taxonomic scope" value="Bacteria"/>
</dbReference>
<dbReference type="HOGENOM" id="CLU_078938_1_0_5"/>
<dbReference type="Proteomes" id="UP000001959">
    <property type="component" value="Chromosome"/>
</dbReference>
<dbReference type="GO" id="GO:1990904">
    <property type="term" value="C:ribonucleoprotein complex"/>
    <property type="evidence" value="ECO:0007669"/>
    <property type="project" value="UniProtKB-KW"/>
</dbReference>
<dbReference type="GO" id="GO:0005840">
    <property type="term" value="C:ribosome"/>
    <property type="evidence" value="ECO:0007669"/>
    <property type="project" value="UniProtKB-KW"/>
</dbReference>
<dbReference type="GO" id="GO:0019843">
    <property type="term" value="F:rRNA binding"/>
    <property type="evidence" value="ECO:0007669"/>
    <property type="project" value="UniProtKB-UniRule"/>
</dbReference>
<dbReference type="GO" id="GO:0003735">
    <property type="term" value="F:structural constituent of ribosome"/>
    <property type="evidence" value="ECO:0007669"/>
    <property type="project" value="InterPro"/>
</dbReference>
<dbReference type="GO" id="GO:0006412">
    <property type="term" value="P:translation"/>
    <property type="evidence" value="ECO:0007669"/>
    <property type="project" value="UniProtKB-UniRule"/>
</dbReference>
<dbReference type="Gene3D" id="3.10.430.100">
    <property type="entry name" value="Ribosomal protein L9, C-terminal domain"/>
    <property type="match status" value="1"/>
</dbReference>
<dbReference type="Gene3D" id="3.40.5.10">
    <property type="entry name" value="Ribosomal protein L9, N-terminal domain"/>
    <property type="match status" value="1"/>
</dbReference>
<dbReference type="HAMAP" id="MF_00503">
    <property type="entry name" value="Ribosomal_bL9"/>
    <property type="match status" value="1"/>
</dbReference>
<dbReference type="InterPro" id="IPR000244">
    <property type="entry name" value="Ribosomal_bL9"/>
</dbReference>
<dbReference type="InterPro" id="IPR009027">
    <property type="entry name" value="Ribosomal_bL9/RNase_H1_N"/>
</dbReference>
<dbReference type="InterPro" id="IPR020594">
    <property type="entry name" value="Ribosomal_bL9_bac/chp"/>
</dbReference>
<dbReference type="InterPro" id="IPR020069">
    <property type="entry name" value="Ribosomal_bL9_C"/>
</dbReference>
<dbReference type="InterPro" id="IPR036791">
    <property type="entry name" value="Ribosomal_bL9_C_sf"/>
</dbReference>
<dbReference type="InterPro" id="IPR020070">
    <property type="entry name" value="Ribosomal_bL9_N"/>
</dbReference>
<dbReference type="InterPro" id="IPR036935">
    <property type="entry name" value="Ribosomal_bL9_N_sf"/>
</dbReference>
<dbReference type="NCBIfam" id="TIGR00158">
    <property type="entry name" value="L9"/>
    <property type="match status" value="1"/>
</dbReference>
<dbReference type="PANTHER" id="PTHR21368">
    <property type="entry name" value="50S RIBOSOMAL PROTEIN L9"/>
    <property type="match status" value="1"/>
</dbReference>
<dbReference type="Pfam" id="PF03948">
    <property type="entry name" value="Ribosomal_L9_C"/>
    <property type="match status" value="1"/>
</dbReference>
<dbReference type="Pfam" id="PF01281">
    <property type="entry name" value="Ribosomal_L9_N"/>
    <property type="match status" value="1"/>
</dbReference>
<dbReference type="SUPFAM" id="SSF55658">
    <property type="entry name" value="L9 N-domain-like"/>
    <property type="match status" value="1"/>
</dbReference>
<dbReference type="SUPFAM" id="SSF55653">
    <property type="entry name" value="Ribosomal protein L9 C-domain"/>
    <property type="match status" value="1"/>
</dbReference>
<dbReference type="PROSITE" id="PS00651">
    <property type="entry name" value="RIBOSOMAL_L9"/>
    <property type="match status" value="1"/>
</dbReference>
<protein>
    <recommendedName>
        <fullName evidence="1">Large ribosomal subunit protein bL9</fullName>
    </recommendedName>
    <alternativeName>
        <fullName evidence="3">50S ribosomal protein L9</fullName>
    </alternativeName>
</protein>
<name>RL9_HYPNA</name>
<proteinExistence type="inferred from homology"/>
<comment type="function">
    <text evidence="1">Binds to the 23S rRNA.</text>
</comment>
<comment type="similarity">
    <text evidence="1">Belongs to the bacterial ribosomal protein bL9 family.</text>
</comment>
<accession>Q0C083</accession>
<feature type="chain" id="PRO_1000014792" description="Large ribosomal subunit protein bL9">
    <location>
        <begin position="1"/>
        <end position="194"/>
    </location>
</feature>
<feature type="region of interest" description="Disordered" evidence="2">
    <location>
        <begin position="166"/>
        <end position="194"/>
    </location>
</feature>
<feature type="compositionally biased region" description="Low complexity" evidence="2">
    <location>
        <begin position="166"/>
        <end position="184"/>
    </location>
</feature>
<feature type="compositionally biased region" description="Basic and acidic residues" evidence="2">
    <location>
        <begin position="185"/>
        <end position="194"/>
    </location>
</feature>